<name>MAL31_YEAST</name>
<evidence type="ECO:0000255" key="1"/>
<evidence type="ECO:0000256" key="2">
    <source>
        <dbReference type="SAM" id="MobiDB-lite"/>
    </source>
</evidence>
<evidence type="ECO:0000269" key="3">
    <source>
    </source>
</evidence>
<evidence type="ECO:0000305" key="4"/>
<gene>
    <name type="primary">MAL31</name>
    <name type="synonym">MAL3T</name>
    <name type="ordered locus">YBR298C</name>
    <name type="ORF">YBR2116</name>
</gene>
<keyword id="KW-0462">Maltose metabolism</keyword>
<keyword id="KW-0472">Membrane</keyword>
<keyword id="KW-1185">Reference proteome</keyword>
<keyword id="KW-0762">Sugar transport</keyword>
<keyword id="KW-0812">Transmembrane</keyword>
<keyword id="KW-1133">Transmembrane helix</keyword>
<keyword id="KW-0813">Transport</keyword>
<sequence>MKGLSSLINRKKDRNDSHLDEIENGVNATEFNSIEMEEQGKKSDFDLSHLEYGPGSLIPNDNNEEVPDLLDEAMQDAKEADESERGMPLMTALKTYPKAAAWSLLVSTTLIQEGYDTAILGAFYALPVFQKKYGSLNSNTGDYEISVSWQIGLCLCYMAGEIVGLQMTGPSVDYMGNRYTLIMALFFLAAFIFILYFCKSLGMIAVGQALCGMPWGCFQCLTVSYASEICPLALRYYLTTYSNLCWAFGQLFAAGIMKNSQNKYANSELGYKLPFALQWIWPLPLAVGIFFAPESPWWLVKKGRIDQARRSLERTLSGKGPEKELLVSMELDKIKTTIEKEQKMSDEGTYWDCVKDGINRRRTRIACLCWIGQCSCGASLIGYSTYFYEKAGVSTDTAFTFSIIQYCLGIAATFISWWASKYCGRFDLYAFGLAFQAIMFFIIGGLGCSDTHGAKMGSGALLMVVAFFYNLGIAPVVFCLVSEIPSSRLRTKTIILARNAYNVIQVVVTVLIMYQLNSEKWNWGAKSGFFWGGFCLATLAWAVVDLPETAGRTFIEINELFRLGVPARKFKSTKVDPFAAAKAAAAEINVKDPKEDLETSVVDEGRNTSSVVNK</sequence>
<accession>P38156</accession>
<accession>D6VQU3</accession>
<accession>Q3SCJ3</accession>
<organism>
    <name type="scientific">Saccharomyces cerevisiae (strain ATCC 204508 / S288c)</name>
    <name type="common">Baker's yeast</name>
    <dbReference type="NCBI Taxonomy" id="559292"/>
    <lineage>
        <taxon>Eukaryota</taxon>
        <taxon>Fungi</taxon>
        <taxon>Dikarya</taxon>
        <taxon>Ascomycota</taxon>
        <taxon>Saccharomycotina</taxon>
        <taxon>Saccharomycetes</taxon>
        <taxon>Saccharomycetales</taxon>
        <taxon>Saccharomycetaceae</taxon>
        <taxon>Saccharomyces</taxon>
    </lineage>
</organism>
<protein>
    <recommendedName>
        <fullName>Maltose permease MAL31</fullName>
    </recommendedName>
    <alternativeName>
        <fullName>Maltose transport protein MAL31</fullName>
    </alternativeName>
</protein>
<dbReference type="EMBL" id="DQ010169">
    <property type="protein sequence ID" value="AAY67702.1"/>
    <property type="molecule type" value="Genomic_DNA"/>
</dbReference>
<dbReference type="EMBL" id="Z36167">
    <property type="protein sequence ID" value="CAA85263.1"/>
    <property type="molecule type" value="Genomic_DNA"/>
</dbReference>
<dbReference type="EMBL" id="AY692794">
    <property type="protein sequence ID" value="AAT92813.1"/>
    <property type="molecule type" value="Genomic_DNA"/>
</dbReference>
<dbReference type="EMBL" id="BK006936">
    <property type="protein sequence ID" value="DAA07413.1"/>
    <property type="molecule type" value="Genomic_DNA"/>
</dbReference>
<dbReference type="PIR" id="S46182">
    <property type="entry name" value="S46182"/>
</dbReference>
<dbReference type="RefSeq" id="NP_009857.1">
    <property type="nucleotide sequence ID" value="NM_001178646.1"/>
</dbReference>
<dbReference type="SMR" id="P38156"/>
<dbReference type="BioGRID" id="32991">
    <property type="interactions" value="87"/>
</dbReference>
<dbReference type="DIP" id="DIP-7544N"/>
<dbReference type="FunCoup" id="P38156">
    <property type="interactions" value="82"/>
</dbReference>
<dbReference type="IntAct" id="P38156">
    <property type="interactions" value="16"/>
</dbReference>
<dbReference type="MINT" id="P38156"/>
<dbReference type="STRING" id="4932.YBR298C"/>
<dbReference type="PaxDb" id="4932-YBR298C"/>
<dbReference type="EnsemblFungi" id="YBR298C_mRNA">
    <property type="protein sequence ID" value="YBR298C"/>
    <property type="gene ID" value="YBR298C"/>
</dbReference>
<dbReference type="GeneID" id="852601"/>
<dbReference type="KEGG" id="sce:YBR298C"/>
<dbReference type="AGR" id="SGD:S000000502"/>
<dbReference type="SGD" id="S000000502">
    <property type="gene designation" value="MAL31"/>
</dbReference>
<dbReference type="VEuPathDB" id="FungiDB:YBR298C"/>
<dbReference type="eggNOG" id="KOG0254">
    <property type="taxonomic scope" value="Eukaryota"/>
</dbReference>
<dbReference type="GeneTree" id="ENSGT00940000176341"/>
<dbReference type="HOGENOM" id="CLU_001265_11_5_1"/>
<dbReference type="InParanoid" id="P38156"/>
<dbReference type="OMA" id="PAFNMKY"/>
<dbReference type="OrthoDB" id="6612291at2759"/>
<dbReference type="BioCyc" id="YEAST:G3O-29216-MONOMER"/>
<dbReference type="BioGRID-ORCS" id="852601">
    <property type="hits" value="0 hits in 10 CRISPR screens"/>
</dbReference>
<dbReference type="PRO" id="PR:P38156"/>
<dbReference type="Proteomes" id="UP000002311">
    <property type="component" value="Chromosome II"/>
</dbReference>
<dbReference type="RNAct" id="P38156">
    <property type="molecule type" value="protein"/>
</dbReference>
<dbReference type="GO" id="GO:0071944">
    <property type="term" value="C:cell periphery"/>
    <property type="evidence" value="ECO:0007005"/>
    <property type="project" value="SGD"/>
</dbReference>
<dbReference type="GO" id="GO:0016020">
    <property type="term" value="C:membrane"/>
    <property type="evidence" value="ECO:0000318"/>
    <property type="project" value="GO_Central"/>
</dbReference>
<dbReference type="GO" id="GO:0005352">
    <property type="term" value="F:alpha-glucoside:proton symporter activity"/>
    <property type="evidence" value="ECO:0000250"/>
    <property type="project" value="SGD"/>
</dbReference>
<dbReference type="GO" id="GO:0005351">
    <property type="term" value="F:carbohydrate:proton symporter activity"/>
    <property type="evidence" value="ECO:0000318"/>
    <property type="project" value="GO_Central"/>
</dbReference>
<dbReference type="GO" id="GO:0000017">
    <property type="term" value="P:alpha-glucoside transport"/>
    <property type="evidence" value="ECO:0000250"/>
    <property type="project" value="SGD"/>
</dbReference>
<dbReference type="GO" id="GO:0008643">
    <property type="term" value="P:carbohydrate transport"/>
    <property type="evidence" value="ECO:0000318"/>
    <property type="project" value="GO_Central"/>
</dbReference>
<dbReference type="GO" id="GO:0000023">
    <property type="term" value="P:maltose metabolic process"/>
    <property type="evidence" value="ECO:0007669"/>
    <property type="project" value="UniProtKB-KW"/>
</dbReference>
<dbReference type="FunFam" id="1.20.1250.20:FF:000254">
    <property type="entry name" value="MAL31p Maltose permease"/>
    <property type="match status" value="1"/>
</dbReference>
<dbReference type="Gene3D" id="1.20.1250.20">
    <property type="entry name" value="MFS general substrate transporter like domains"/>
    <property type="match status" value="1"/>
</dbReference>
<dbReference type="InterPro" id="IPR020846">
    <property type="entry name" value="MFS_dom"/>
</dbReference>
<dbReference type="InterPro" id="IPR005828">
    <property type="entry name" value="MFS_sugar_transport-like"/>
</dbReference>
<dbReference type="InterPro" id="IPR050360">
    <property type="entry name" value="MFS_Sugar_Transporters"/>
</dbReference>
<dbReference type="InterPro" id="IPR036259">
    <property type="entry name" value="MFS_trans_sf"/>
</dbReference>
<dbReference type="InterPro" id="IPR003663">
    <property type="entry name" value="Sugar/inositol_transpt"/>
</dbReference>
<dbReference type="InterPro" id="IPR005829">
    <property type="entry name" value="Sugar_transporter_CS"/>
</dbReference>
<dbReference type="NCBIfam" id="TIGR00879">
    <property type="entry name" value="SP"/>
    <property type="match status" value="1"/>
</dbReference>
<dbReference type="PANTHER" id="PTHR48022:SF5">
    <property type="entry name" value="ALPHA-GLUCOSIDES PERMEASE MPH2-RELATED"/>
    <property type="match status" value="1"/>
</dbReference>
<dbReference type="PANTHER" id="PTHR48022">
    <property type="entry name" value="PLASTIDIC GLUCOSE TRANSPORTER 4"/>
    <property type="match status" value="1"/>
</dbReference>
<dbReference type="Pfam" id="PF00083">
    <property type="entry name" value="Sugar_tr"/>
    <property type="match status" value="1"/>
</dbReference>
<dbReference type="SUPFAM" id="SSF103473">
    <property type="entry name" value="MFS general substrate transporter"/>
    <property type="match status" value="1"/>
</dbReference>
<dbReference type="PROSITE" id="PS50850">
    <property type="entry name" value="MFS"/>
    <property type="match status" value="1"/>
</dbReference>
<dbReference type="PROSITE" id="PS00217">
    <property type="entry name" value="SUGAR_TRANSPORT_2"/>
    <property type="match status" value="1"/>
</dbReference>
<proteinExistence type="evidence at protein level"/>
<reference key="1">
    <citation type="journal article" date="2005" name="Yeast">
        <title>Maltotriose utilization in lager yeast strains: MTT1 encodes a maltotriose transporter.</title>
        <authorList>
            <person name="Dietvorst J."/>
            <person name="Londesborough J."/>
            <person name="Steensma H.Y."/>
        </authorList>
    </citation>
    <scope>NUCLEOTIDE SEQUENCE [GENOMIC DNA]</scope>
    <source>
        <strain>CEN.PK 113-7D</strain>
    </source>
</reference>
<reference key="2">
    <citation type="journal article" date="1995" name="Yeast">
        <title>Sequence of a 9.8 kb segment of yeast chromosome II including the three genes of the MAL3 locus and three unidentified open reading frames.</title>
        <authorList>
            <person name="Feuermann M."/>
            <person name="Charbonnel L."/>
            <person name="De Montigny J."/>
            <person name="Bloch J.C."/>
            <person name="Potier S."/>
            <person name="Souciet J.-L."/>
        </authorList>
    </citation>
    <scope>NUCLEOTIDE SEQUENCE [GENOMIC DNA]</scope>
    <source>
        <strain>ATCC 204508 / S288c</strain>
    </source>
</reference>
<reference key="3">
    <citation type="journal article" date="1994" name="EMBO J.">
        <title>Complete DNA sequence of yeast chromosome II.</title>
        <authorList>
            <person name="Feldmann H."/>
            <person name="Aigle M."/>
            <person name="Aljinovic G."/>
            <person name="Andre B."/>
            <person name="Baclet M.C."/>
            <person name="Barthe C."/>
            <person name="Baur A."/>
            <person name="Becam A.-M."/>
            <person name="Biteau N."/>
            <person name="Boles E."/>
            <person name="Brandt T."/>
            <person name="Brendel M."/>
            <person name="Brueckner M."/>
            <person name="Bussereau F."/>
            <person name="Christiansen C."/>
            <person name="Contreras R."/>
            <person name="Crouzet M."/>
            <person name="Cziepluch C."/>
            <person name="Demolis N."/>
            <person name="Delaveau T."/>
            <person name="Doignon F."/>
            <person name="Domdey H."/>
            <person name="Duesterhus S."/>
            <person name="Dubois E."/>
            <person name="Dujon B."/>
            <person name="El Bakkoury M."/>
            <person name="Entian K.-D."/>
            <person name="Feuermann M."/>
            <person name="Fiers W."/>
            <person name="Fobo G.M."/>
            <person name="Fritz C."/>
            <person name="Gassenhuber J."/>
            <person name="Glansdorff N."/>
            <person name="Goffeau A."/>
            <person name="Grivell L.A."/>
            <person name="de Haan M."/>
            <person name="Hein C."/>
            <person name="Herbert C.J."/>
            <person name="Hollenberg C.P."/>
            <person name="Holmstroem K."/>
            <person name="Jacq C."/>
            <person name="Jacquet M."/>
            <person name="Jauniaux J.-C."/>
            <person name="Jonniaux J.-L."/>
            <person name="Kallesoee T."/>
            <person name="Kiesau P."/>
            <person name="Kirchrath L."/>
            <person name="Koetter P."/>
            <person name="Korol S."/>
            <person name="Liebl S."/>
            <person name="Logghe M."/>
            <person name="Lohan A.J.E."/>
            <person name="Louis E.J."/>
            <person name="Li Z.Y."/>
            <person name="Maat M.J."/>
            <person name="Mallet L."/>
            <person name="Mannhaupt G."/>
            <person name="Messenguy F."/>
            <person name="Miosga T."/>
            <person name="Molemans F."/>
            <person name="Mueller S."/>
            <person name="Nasr F."/>
            <person name="Obermaier B."/>
            <person name="Perea J."/>
            <person name="Pierard A."/>
            <person name="Piravandi E."/>
            <person name="Pohl F.M."/>
            <person name="Pohl T.M."/>
            <person name="Potier S."/>
            <person name="Proft M."/>
            <person name="Purnelle B."/>
            <person name="Ramezani Rad M."/>
            <person name="Rieger M."/>
            <person name="Rose M."/>
            <person name="Schaaff-Gerstenschlaeger I."/>
            <person name="Scherens B."/>
            <person name="Schwarzlose C."/>
            <person name="Skala J."/>
            <person name="Slonimski P.P."/>
            <person name="Smits P.H.M."/>
            <person name="Souciet J.-L."/>
            <person name="Steensma H.Y."/>
            <person name="Stucka R."/>
            <person name="Urrestarazu L.A."/>
            <person name="van der Aart Q.J.M."/>
            <person name="Van Dyck L."/>
            <person name="Vassarotti A."/>
            <person name="Vetter I."/>
            <person name="Vierendeels F."/>
            <person name="Vissers S."/>
            <person name="Wagner G."/>
            <person name="de Wergifosse P."/>
            <person name="Wolfe K.H."/>
            <person name="Zagulski M."/>
            <person name="Zimmermann F.K."/>
            <person name="Mewes H.-W."/>
            <person name="Kleine K."/>
        </authorList>
    </citation>
    <scope>NUCLEOTIDE SEQUENCE [LARGE SCALE GENOMIC DNA]</scope>
    <source>
        <strain>ATCC 204508 / S288c</strain>
    </source>
</reference>
<reference key="4">
    <citation type="journal article" date="2014" name="G3 (Bethesda)">
        <title>The reference genome sequence of Saccharomyces cerevisiae: Then and now.</title>
        <authorList>
            <person name="Engel S.R."/>
            <person name="Dietrich F.S."/>
            <person name="Fisk D.G."/>
            <person name="Binkley G."/>
            <person name="Balakrishnan R."/>
            <person name="Costanzo M.C."/>
            <person name="Dwight S.S."/>
            <person name="Hitz B.C."/>
            <person name="Karra K."/>
            <person name="Nash R.S."/>
            <person name="Weng S."/>
            <person name="Wong E.D."/>
            <person name="Lloyd P."/>
            <person name="Skrzypek M.S."/>
            <person name="Miyasato S.R."/>
            <person name="Simison M."/>
            <person name="Cherry J.M."/>
        </authorList>
    </citation>
    <scope>GENOME REANNOTATION</scope>
    <source>
        <strain>ATCC 204508 / S288c</strain>
    </source>
</reference>
<reference key="5">
    <citation type="journal article" date="2007" name="Genome Res.">
        <title>Approaching a complete repository of sequence-verified protein-encoding clones for Saccharomyces cerevisiae.</title>
        <authorList>
            <person name="Hu Y."/>
            <person name="Rolfs A."/>
            <person name="Bhullar B."/>
            <person name="Murthy T.V.S."/>
            <person name="Zhu C."/>
            <person name="Berger M.F."/>
            <person name="Camargo A.A."/>
            <person name="Kelley F."/>
            <person name="McCarron S."/>
            <person name="Jepson D."/>
            <person name="Richardson A."/>
            <person name="Raphael J."/>
            <person name="Moreira D."/>
            <person name="Taycher E."/>
            <person name="Zuo D."/>
            <person name="Mohr S."/>
            <person name="Kane M.F."/>
            <person name="Williamson J."/>
            <person name="Simpson A.J.G."/>
            <person name="Bulyk M.L."/>
            <person name="Harlow E."/>
            <person name="Marsischky G."/>
            <person name="Kolodner R.D."/>
            <person name="LaBaer J."/>
        </authorList>
    </citation>
    <scope>NUCLEOTIDE SEQUENCE [GENOMIC DNA]</scope>
    <source>
        <strain>ATCC 204508 / S288c</strain>
    </source>
</reference>
<reference key="6">
    <citation type="journal article" date="2002" name="Yeast">
        <title>Characterization of the putative maltose transporters encoded by YDL247w and YJR160c.</title>
        <authorList>
            <person name="Day R.E."/>
            <person name="Higgins V.J."/>
            <person name="Rogers P.J."/>
            <person name="Dawes I.W."/>
        </authorList>
    </citation>
    <scope>FUNCTION</scope>
    <scope>INDUCTION</scope>
</reference>
<reference key="7">
    <citation type="journal article" date="2006" name="Proc. Natl. Acad. Sci. U.S.A.">
        <title>A global topology map of the Saccharomyces cerevisiae membrane proteome.</title>
        <authorList>
            <person name="Kim H."/>
            <person name="Melen K."/>
            <person name="Oesterberg M."/>
            <person name="von Heijne G."/>
        </authorList>
    </citation>
    <scope>TOPOLOGY [LARGE SCALE ANALYSIS]</scope>
    <source>
        <strain>ATCC 208353 / W303-1A</strain>
    </source>
</reference>
<comment type="function">
    <text evidence="3">High-affinity uptake of maltose and maltotriose. Also transports turanose but not alpha-methylglucoside, melezitose or trehalose.</text>
</comment>
<comment type="subcellular location">
    <subcellularLocation>
        <location>Membrane</location>
        <topology>Multi-pass membrane protein</topology>
    </subcellularLocation>
</comment>
<comment type="induction">
    <text evidence="3">By maltose and maltotriose. Repressed by glucose.</text>
</comment>
<comment type="similarity">
    <text evidence="4">Belongs to the major facilitator superfamily. Sugar transporter (TC 2.A.1.1) family.</text>
</comment>
<feature type="chain" id="PRO_0000050422" description="Maltose permease MAL31">
    <location>
        <begin position="1"/>
        <end position="614"/>
    </location>
</feature>
<feature type="topological domain" description="Cytoplasmic" evidence="1">
    <location>
        <begin position="1"/>
        <end position="108"/>
    </location>
</feature>
<feature type="transmembrane region" description="Helical; Name=1" evidence="1">
    <location>
        <begin position="109"/>
        <end position="129"/>
    </location>
</feature>
<feature type="topological domain" description="Extracellular" evidence="1">
    <location>
        <begin position="130"/>
        <end position="144"/>
    </location>
</feature>
<feature type="transmembrane region" description="Helical; Name=2" evidence="1">
    <location>
        <begin position="145"/>
        <end position="165"/>
    </location>
</feature>
<feature type="topological domain" description="Cytoplasmic" evidence="1">
    <location>
        <begin position="166"/>
        <end position="180"/>
    </location>
</feature>
<feature type="transmembrane region" description="Helical; Name=3" evidence="1">
    <location>
        <begin position="181"/>
        <end position="201"/>
    </location>
</feature>
<feature type="topological domain" description="Extracellular" evidence="1">
    <location>
        <position position="202"/>
    </location>
</feature>
<feature type="transmembrane region" description="Helical; Name=4" evidence="1">
    <location>
        <begin position="203"/>
        <end position="223"/>
    </location>
</feature>
<feature type="topological domain" description="Cytoplasmic" evidence="1">
    <location>
        <begin position="224"/>
        <end position="236"/>
    </location>
</feature>
<feature type="transmembrane region" description="Helical; Name=5" evidence="1">
    <location>
        <begin position="237"/>
        <end position="257"/>
    </location>
</feature>
<feature type="topological domain" description="Extracellular" evidence="1">
    <location>
        <begin position="258"/>
        <end position="272"/>
    </location>
</feature>
<feature type="transmembrane region" description="Helical; Name=6" evidence="1">
    <location>
        <begin position="273"/>
        <end position="293"/>
    </location>
</feature>
<feature type="topological domain" description="Cytoplasmic" evidence="1">
    <location>
        <begin position="294"/>
        <end position="364"/>
    </location>
</feature>
<feature type="transmembrane region" description="Helical; Name=7" evidence="1">
    <location>
        <begin position="365"/>
        <end position="385"/>
    </location>
</feature>
<feature type="topological domain" description="Extracellular" evidence="1">
    <location>
        <begin position="386"/>
        <end position="398"/>
    </location>
</feature>
<feature type="transmembrane region" description="Helical; Name=8" evidence="1">
    <location>
        <begin position="399"/>
        <end position="419"/>
    </location>
</feature>
<feature type="topological domain" description="Cytoplasmic" evidence="1">
    <location>
        <begin position="420"/>
        <end position="427"/>
    </location>
</feature>
<feature type="transmembrane region" description="Helical; Name=9" evidence="1">
    <location>
        <begin position="428"/>
        <end position="448"/>
    </location>
</feature>
<feature type="topological domain" description="Extracellular" evidence="1">
    <location>
        <begin position="449"/>
        <end position="460"/>
    </location>
</feature>
<feature type="transmembrane region" description="Helical; Name=10" evidence="1">
    <location>
        <begin position="461"/>
        <end position="481"/>
    </location>
</feature>
<feature type="topological domain" description="Cytoplasmic" evidence="1">
    <location>
        <begin position="482"/>
        <end position="493"/>
    </location>
</feature>
<feature type="transmembrane region" description="Helical; Name=11" evidence="1">
    <location>
        <begin position="494"/>
        <end position="514"/>
    </location>
</feature>
<feature type="topological domain" description="Extracellular" evidence="1">
    <location>
        <begin position="515"/>
        <end position="526"/>
    </location>
</feature>
<feature type="transmembrane region" description="Helical; Name=12" evidence="1">
    <location>
        <begin position="527"/>
        <end position="547"/>
    </location>
</feature>
<feature type="topological domain" description="Cytoplasmic" evidence="1">
    <location>
        <begin position="548"/>
        <end position="614"/>
    </location>
</feature>
<feature type="region of interest" description="Disordered" evidence="2">
    <location>
        <begin position="1"/>
        <end position="48"/>
    </location>
</feature>
<feature type="region of interest" description="Disordered" evidence="2">
    <location>
        <begin position="595"/>
        <end position="614"/>
    </location>
</feature>
<feature type="compositionally biased region" description="Basic and acidic residues" evidence="2">
    <location>
        <begin position="38"/>
        <end position="48"/>
    </location>
</feature>